<accession>E3W202</accession>
<keyword id="KW-0002">3D-structure</keyword>
<keyword id="KW-0456">Lyase</keyword>
<keyword id="KW-0460">Magnesium</keyword>
<keyword id="KW-0464">Manganese</keyword>
<keyword id="KW-0479">Metal-binding</keyword>
<reference key="1">
    <citation type="journal article" date="2011" name="J. Biol. Chem.">
        <title>Sandalwood fragrance biosynthesis involves sesquiterpene synthases of both the terpene synthase (TPS)-a and TPS-b Subfamilies, including santalene synthases.</title>
        <authorList>
            <person name="Jones C.G."/>
            <person name="Moniodis J."/>
            <person name="Zulak K.G."/>
            <person name="Scaffidi A."/>
            <person name="Plummer J.A."/>
            <person name="Ghisalberti E.L."/>
            <person name="Barbour E.L."/>
            <person name="Bohlmann J."/>
        </authorList>
    </citation>
    <scope>NUCLEOTIDE SEQUENCE [MRNA]</scope>
    <scope>FUNCTION</scope>
    <scope>CATALYTIC ACTIVITY</scope>
    <scope>BIOPHYSICOCHEMICAL PROPERTIES</scope>
</reference>
<dbReference type="EC" id="4.2.3.82" evidence="3"/>
<dbReference type="EC" id="4.2.3.83" evidence="3"/>
<dbReference type="EC" id="4.2.3.81" evidence="3"/>
<dbReference type="EMBL" id="HQ343276">
    <property type="protein sequence ID" value="ADO87000.1"/>
    <property type="molecule type" value="mRNA"/>
</dbReference>
<dbReference type="PDB" id="5ZZJ">
    <property type="method" value="X-ray"/>
    <property type="resolution" value="2.60 A"/>
    <property type="chains" value="A/B/C/D=1-569"/>
</dbReference>
<dbReference type="PDBsum" id="5ZZJ"/>
<dbReference type="SMR" id="E3W202"/>
<dbReference type="KEGG" id="ag:ADO87000"/>
<dbReference type="BRENDA" id="4.2.3.81">
    <property type="organism ID" value="5574"/>
</dbReference>
<dbReference type="BRENDA" id="4.2.3.82">
    <property type="organism ID" value="5574"/>
</dbReference>
<dbReference type="BRENDA" id="4.2.3.83">
    <property type="organism ID" value="5574"/>
</dbReference>
<dbReference type="GO" id="GO:0000287">
    <property type="term" value="F:magnesium ion binding"/>
    <property type="evidence" value="ECO:0007669"/>
    <property type="project" value="InterPro"/>
</dbReference>
<dbReference type="GO" id="GO:0010333">
    <property type="term" value="F:terpene synthase activity"/>
    <property type="evidence" value="ECO:0007669"/>
    <property type="project" value="InterPro"/>
</dbReference>
<dbReference type="GO" id="GO:0016102">
    <property type="term" value="P:diterpenoid biosynthetic process"/>
    <property type="evidence" value="ECO:0007669"/>
    <property type="project" value="InterPro"/>
</dbReference>
<dbReference type="CDD" id="cd00684">
    <property type="entry name" value="Terpene_cyclase_plant_C1"/>
    <property type="match status" value="1"/>
</dbReference>
<dbReference type="FunFam" id="1.10.600.10:FF:000007">
    <property type="entry name" value="Isoprene synthase, chloroplastic"/>
    <property type="match status" value="1"/>
</dbReference>
<dbReference type="FunFam" id="1.50.10.130:FF:000001">
    <property type="entry name" value="Isoprene synthase, chloroplastic"/>
    <property type="match status" value="1"/>
</dbReference>
<dbReference type="Gene3D" id="1.10.600.10">
    <property type="entry name" value="Farnesyl Diphosphate Synthase"/>
    <property type="match status" value="1"/>
</dbReference>
<dbReference type="Gene3D" id="1.50.10.130">
    <property type="entry name" value="Terpene synthase, N-terminal domain"/>
    <property type="match status" value="1"/>
</dbReference>
<dbReference type="InterPro" id="IPR008949">
    <property type="entry name" value="Isoprenoid_synthase_dom_sf"/>
</dbReference>
<dbReference type="InterPro" id="IPR034741">
    <property type="entry name" value="Terpene_cyclase-like_1_C"/>
</dbReference>
<dbReference type="InterPro" id="IPR044814">
    <property type="entry name" value="Terpene_cyclase_plant_C1"/>
</dbReference>
<dbReference type="InterPro" id="IPR001906">
    <property type="entry name" value="Terpene_synth_N"/>
</dbReference>
<dbReference type="InterPro" id="IPR036965">
    <property type="entry name" value="Terpene_synth_N_sf"/>
</dbReference>
<dbReference type="InterPro" id="IPR050148">
    <property type="entry name" value="Terpene_synthase-like"/>
</dbReference>
<dbReference type="InterPro" id="IPR005630">
    <property type="entry name" value="Terpene_synthase_metal-bd"/>
</dbReference>
<dbReference type="InterPro" id="IPR008930">
    <property type="entry name" value="Terpenoid_cyclase/PrenylTrfase"/>
</dbReference>
<dbReference type="PANTHER" id="PTHR31225:SF245">
    <property type="entry name" value="(-)-ALPHA-TERPINEOL SYNTHASE-LIKE"/>
    <property type="match status" value="1"/>
</dbReference>
<dbReference type="PANTHER" id="PTHR31225">
    <property type="entry name" value="OS04G0344100 PROTEIN-RELATED"/>
    <property type="match status" value="1"/>
</dbReference>
<dbReference type="Pfam" id="PF01397">
    <property type="entry name" value="Terpene_synth"/>
    <property type="match status" value="1"/>
</dbReference>
<dbReference type="Pfam" id="PF03936">
    <property type="entry name" value="Terpene_synth_C"/>
    <property type="match status" value="1"/>
</dbReference>
<dbReference type="SFLD" id="SFLDS00005">
    <property type="entry name" value="Isoprenoid_Synthase_Type_I"/>
    <property type="match status" value="1"/>
</dbReference>
<dbReference type="SFLD" id="SFLDG01019">
    <property type="entry name" value="Terpene_Cyclase_Like_1_C_Termi"/>
    <property type="match status" value="1"/>
</dbReference>
<dbReference type="SUPFAM" id="SSF48239">
    <property type="entry name" value="Terpenoid cyclases/Protein prenyltransferases"/>
    <property type="match status" value="1"/>
</dbReference>
<dbReference type="SUPFAM" id="SSF48576">
    <property type="entry name" value="Terpenoid synthases"/>
    <property type="match status" value="1"/>
</dbReference>
<sequence length="569" mass="65163">MDSSTATAMTAPFIDPTDHVNLKTDTDASENRRMGNYKPSIWNYDFLQSLATHHNIVEERHLKLAEKLKGQVKFMFGAPMEPLAKLELVDVVQRLGLNHLFETEIKEALFSIYKDGSNGWWFGHLHATSLRFRLLRQCGLFIPQDVFKTFQNKTGEFDMKLCDNVKGLLSLYEASYLGWKGENILDEAKAFTTKCLKSAWENISEKWLAKRVKHALALPLHWRVPRIEARWFIEAYEQEANMNPTLLKLAKLDFNMVQSIHQKEIGELARWWVTTGLDKLAFARNNLLQSYMWSCAIASDPKFKLARETIVEIGSVLTVVDDGYDVYGSIDELDLYTSSVERWSCVEIDKLPNTLKLIFMSMFNKTNEVGLRVQHERGYNSIPTFIKAWVEQCKSYQKEARWFHGGHTPPLEEYSLNGLVSIGFPLLLITGYVAIAENEAALDKVHPLPDLLHYSSLLSRLINDIGTSPDEMARGDNLKSIHCYMNETGASEEVAREHIKGVIEENWKILNQCCFDQSQFQEPFITFNLNSVRGSHFFYEFGDGFGVTDSWTKVDMKSVLIDPIPLGEE</sequence>
<evidence type="ECO:0000250" key="1">
    <source>
        <dbReference type="UniProtKB" id="A0A1C9J6A7"/>
    </source>
</evidence>
<evidence type="ECO:0000250" key="2">
    <source>
        <dbReference type="UniProtKB" id="Q40577"/>
    </source>
</evidence>
<evidence type="ECO:0000269" key="3">
    <source>
    </source>
</evidence>
<evidence type="ECO:0000305" key="4"/>
<evidence type="ECO:0007829" key="5">
    <source>
        <dbReference type="PDB" id="5ZZJ"/>
    </source>
</evidence>
<comment type="function">
    <text evidence="3">Catalyzes a mixture of sesquiterpenoids from (2E,6E)-farnesyl diphosphate in fragrance biosynthesis. Catalyzes the formation of alpha-santalene, beta-santalene, epi-beta-santalene and exo-alpha-bergamotene, as well as traces of alpha-farnesene and beta-farnesene. Also acts with (Z,Z)-farnesyl diphosphate isomer, producing alpha-endo-bergamotene, alpha-santalene, (Z)-beta-farnesene, epi-beta-santalene, and beta-santalene.</text>
</comment>
<comment type="catalytic activity">
    <reaction evidence="3">
        <text>(2E,6E)-farnesyl diphosphate = (1S,5S,6R)-alpha-bergamotene + diphosphate</text>
        <dbReference type="Rhea" id="RHEA:31427"/>
        <dbReference type="ChEBI" id="CHEBI:33019"/>
        <dbReference type="ChEBI" id="CHEBI:62756"/>
        <dbReference type="ChEBI" id="CHEBI:175763"/>
        <dbReference type="EC" id="4.2.3.81"/>
    </reaction>
</comment>
<comment type="catalytic activity">
    <reaction evidence="3">
        <text>(2E,6E)-farnesyl diphosphate = (+)-alpha-santalene + diphosphate</text>
        <dbReference type="Rhea" id="RHEA:31435"/>
        <dbReference type="ChEBI" id="CHEBI:33019"/>
        <dbReference type="ChEBI" id="CHEBI:61677"/>
        <dbReference type="ChEBI" id="CHEBI:175763"/>
        <dbReference type="EC" id="4.2.3.82"/>
    </reaction>
</comment>
<comment type="catalytic activity">
    <reaction evidence="3">
        <text>(2E,6E)-farnesyl diphosphate = (-)-beta-santalene + diphosphate</text>
        <dbReference type="Rhea" id="RHEA:31431"/>
        <dbReference type="ChEBI" id="CHEBI:10440"/>
        <dbReference type="ChEBI" id="CHEBI:33019"/>
        <dbReference type="ChEBI" id="CHEBI:175763"/>
        <dbReference type="EC" id="4.2.3.83"/>
    </reaction>
</comment>
<comment type="cofactor">
    <cofactor evidence="1">
        <name>Mg(2+)</name>
        <dbReference type="ChEBI" id="CHEBI:18420"/>
    </cofactor>
    <cofactor evidence="1">
        <name>Mn(2+)</name>
        <dbReference type="ChEBI" id="CHEBI:29035"/>
    </cofactor>
    <text evidence="1">Binds 3 Mg(2+) or Mn(2+) ions per subunit.</text>
</comment>
<comment type="biophysicochemical properties">
    <kinetics>
        <KM evidence="3">1.4 uM for (2E,6E)-farnesyl diphosphate</KM>
        <text>kcat is 0.34 sec(-1) with (2E,6E)-farnesyl diphosphate as substrate.</text>
    </kinetics>
</comment>
<comment type="domain">
    <text evidence="2">The Asp-Asp-Xaa-Xaa-Asp/Glu (DDXXD/E) motif is important for the catalytic activity, presumably through binding to Mg(2+).</text>
</comment>
<comment type="similarity">
    <text evidence="4">Belongs to the terpene synthase family. Tpsb subfamily.</text>
</comment>
<proteinExistence type="evidence at protein level"/>
<protein>
    <recommendedName>
        <fullName>Santalene synthase</fullName>
        <shortName>SaSSy</shortName>
    </recommendedName>
    <alternativeName>
        <fullName>Alpha-santalene synthase</fullName>
        <ecNumber evidence="3">4.2.3.82</ecNumber>
    </alternativeName>
    <alternativeName>
        <fullName>Beta-santalene synthase</fullName>
        <ecNumber evidence="3">4.2.3.83</ecNumber>
    </alternativeName>
    <alternativeName>
        <fullName>Exo-alpha-bergamotene synthase</fullName>
        <ecNumber evidence="3">4.2.3.81</ecNumber>
    </alternativeName>
</protein>
<organism>
    <name type="scientific">Santalum album</name>
    <name type="common">White sandalwood</name>
    <dbReference type="NCBI Taxonomy" id="35974"/>
    <lineage>
        <taxon>Eukaryota</taxon>
        <taxon>Viridiplantae</taxon>
        <taxon>Streptophyta</taxon>
        <taxon>Embryophyta</taxon>
        <taxon>Tracheophyta</taxon>
        <taxon>Spermatophyta</taxon>
        <taxon>Magnoliopsida</taxon>
        <taxon>eudicotyledons</taxon>
        <taxon>Gunneridae</taxon>
        <taxon>Pentapetalae</taxon>
        <taxon>Santalales</taxon>
        <taxon>Santalaceae</taxon>
        <taxon>Santalum</taxon>
    </lineage>
</organism>
<name>SASY_SANAL</name>
<feature type="chain" id="PRO_0000418944" description="Santalene synthase">
    <location>
        <begin position="1"/>
        <end position="569"/>
    </location>
</feature>
<feature type="short sequence motif" description="DDXXD motif" evidence="2">
    <location>
        <begin position="321"/>
        <end position="325"/>
    </location>
</feature>
<feature type="binding site" evidence="2">
    <location>
        <position position="284"/>
    </location>
    <ligand>
        <name>(2E)-geranyl diphosphate</name>
        <dbReference type="ChEBI" id="CHEBI:58057"/>
    </ligand>
</feature>
<feature type="binding site" evidence="2">
    <location>
        <position position="321"/>
    </location>
    <ligand>
        <name>(2E)-geranyl diphosphate</name>
        <dbReference type="ChEBI" id="CHEBI:58057"/>
    </ligand>
</feature>
<feature type="binding site" evidence="2">
    <location>
        <position position="321"/>
    </location>
    <ligand>
        <name>Mg(2+)</name>
        <dbReference type="ChEBI" id="CHEBI:18420"/>
        <label>1</label>
    </ligand>
</feature>
<feature type="binding site" evidence="2">
    <location>
        <position position="321"/>
    </location>
    <ligand>
        <name>Mg(2+)</name>
        <dbReference type="ChEBI" id="CHEBI:18420"/>
        <label>2</label>
    </ligand>
</feature>
<feature type="binding site" evidence="2">
    <location>
        <position position="325"/>
    </location>
    <ligand>
        <name>(2E)-geranyl diphosphate</name>
        <dbReference type="ChEBI" id="CHEBI:58057"/>
    </ligand>
</feature>
<feature type="binding site" evidence="2">
    <location>
        <position position="325"/>
    </location>
    <ligand>
        <name>Mg(2+)</name>
        <dbReference type="ChEBI" id="CHEBI:18420"/>
        <label>1</label>
    </ligand>
</feature>
<feature type="binding site" evidence="2">
    <location>
        <position position="325"/>
    </location>
    <ligand>
        <name>Mg(2+)</name>
        <dbReference type="ChEBI" id="CHEBI:18420"/>
        <label>2</label>
    </ligand>
</feature>
<feature type="binding site" evidence="2">
    <location>
        <position position="460"/>
    </location>
    <ligand>
        <name>(2E)-geranyl diphosphate</name>
        <dbReference type="ChEBI" id="CHEBI:58057"/>
    </ligand>
</feature>
<feature type="binding site" evidence="2">
    <location>
        <position position="463"/>
    </location>
    <ligand>
        <name>Mg(2+)</name>
        <dbReference type="ChEBI" id="CHEBI:18420"/>
        <label>3</label>
    </ligand>
</feature>
<feature type="binding site" evidence="2">
    <location>
        <position position="467"/>
    </location>
    <ligand>
        <name>Mg(2+)</name>
        <dbReference type="ChEBI" id="CHEBI:18420"/>
        <label>3</label>
    </ligand>
</feature>
<feature type="binding site" evidence="2">
    <location>
        <position position="471"/>
    </location>
    <ligand>
        <name>Mg(2+)</name>
        <dbReference type="ChEBI" id="CHEBI:18420"/>
        <label>3</label>
    </ligand>
</feature>
<feature type="helix" evidence="5">
    <location>
        <begin position="44"/>
        <end position="48"/>
    </location>
</feature>
<feature type="helix" evidence="5">
    <location>
        <begin position="49"/>
        <end position="51"/>
    </location>
</feature>
<feature type="helix" evidence="5">
    <location>
        <begin position="59"/>
        <end position="77"/>
    </location>
</feature>
<feature type="helix" evidence="5">
    <location>
        <begin position="82"/>
        <end position="94"/>
    </location>
</feature>
<feature type="helix" evidence="5">
    <location>
        <begin position="97"/>
        <end position="100"/>
    </location>
</feature>
<feature type="helix" evidence="5">
    <location>
        <begin position="102"/>
        <end position="112"/>
    </location>
</feature>
<feature type="turn" evidence="5">
    <location>
        <begin position="119"/>
        <end position="123"/>
    </location>
</feature>
<feature type="helix" evidence="5">
    <location>
        <begin position="125"/>
        <end position="137"/>
    </location>
</feature>
<feature type="helix" evidence="5">
    <location>
        <begin position="144"/>
        <end position="150"/>
    </location>
</feature>
<feature type="helix" evidence="5">
    <location>
        <begin position="159"/>
        <end position="162"/>
    </location>
</feature>
<feature type="helix" evidence="5">
    <location>
        <begin position="165"/>
        <end position="175"/>
    </location>
</feature>
<feature type="helix" evidence="5">
    <location>
        <begin position="183"/>
        <end position="199"/>
    </location>
</feature>
<feature type="helix" evidence="5">
    <location>
        <begin position="200"/>
        <end position="202"/>
    </location>
</feature>
<feature type="helix" evidence="5">
    <location>
        <begin position="206"/>
        <end position="217"/>
    </location>
</feature>
<feature type="helix" evidence="5">
    <location>
        <begin position="220"/>
        <end position="222"/>
    </location>
</feature>
<feature type="helix" evidence="5">
    <location>
        <begin position="225"/>
        <end position="236"/>
    </location>
</feature>
<feature type="helix" evidence="5">
    <location>
        <begin position="244"/>
        <end position="274"/>
    </location>
</feature>
<feature type="helix" evidence="5">
    <location>
        <begin position="277"/>
        <end position="279"/>
    </location>
</feature>
<feature type="strand" evidence="5">
    <location>
        <begin position="281"/>
        <end position="283"/>
    </location>
</feature>
<feature type="helix" evidence="5">
    <location>
        <begin position="287"/>
        <end position="297"/>
    </location>
</feature>
<feature type="helix" evidence="5">
    <location>
        <begin position="301"/>
        <end position="303"/>
    </location>
</feature>
<feature type="helix" evidence="5">
    <location>
        <begin position="304"/>
        <end position="325"/>
    </location>
</feature>
<feature type="helix" evidence="5">
    <location>
        <begin position="330"/>
        <end position="342"/>
    </location>
</feature>
<feature type="strand" evidence="5">
    <location>
        <begin position="345"/>
        <end position="347"/>
    </location>
</feature>
<feature type="helix" evidence="5">
    <location>
        <begin position="353"/>
        <end position="377"/>
    </location>
</feature>
<feature type="helix" evidence="5">
    <location>
        <begin position="382"/>
        <end position="404"/>
    </location>
</feature>
<feature type="helix" evidence="5">
    <location>
        <begin position="411"/>
        <end position="421"/>
    </location>
</feature>
<feature type="helix" evidence="5">
    <location>
        <begin position="424"/>
        <end position="433"/>
    </location>
</feature>
<feature type="helix" evidence="5">
    <location>
        <begin position="439"/>
        <end position="445"/>
    </location>
</feature>
<feature type="helix" evidence="5">
    <location>
        <begin position="450"/>
        <end position="465"/>
    </location>
</feature>
<feature type="helix" evidence="5">
    <location>
        <begin position="480"/>
        <end position="488"/>
    </location>
</feature>
<feature type="helix" evidence="5">
    <location>
        <begin position="492"/>
        <end position="513"/>
    </location>
</feature>
<feature type="helix" evidence="5">
    <location>
        <begin position="524"/>
        <end position="538"/>
    </location>
</feature>
<feature type="strand" evidence="5">
    <location>
        <begin position="540"/>
        <end position="542"/>
    </location>
</feature>
<feature type="strand" evidence="5">
    <location>
        <begin position="544"/>
        <end position="550"/>
    </location>
</feature>
<feature type="helix" evidence="5">
    <location>
        <begin position="553"/>
        <end position="560"/>
    </location>
</feature>